<evidence type="ECO:0000250" key="1"/>
<evidence type="ECO:0000255" key="2"/>
<evidence type="ECO:0000305" key="3"/>
<feature type="signal peptide" description="Tat-type signal" evidence="2">
    <location>
        <begin position="1"/>
        <end position="25"/>
    </location>
</feature>
<feature type="chain" id="PRO_0000020220" description="Glucans biosynthesis protein G">
    <location>
        <begin position="26"/>
        <end position="503"/>
    </location>
</feature>
<dbReference type="EMBL" id="BA000040">
    <property type="protein sequence ID" value="BAC53319.1"/>
    <property type="status" value="ALT_INIT"/>
    <property type="molecule type" value="Genomic_DNA"/>
</dbReference>
<dbReference type="RefSeq" id="NP_774694.1">
    <property type="nucleotide sequence ID" value="NC_004463.1"/>
</dbReference>
<dbReference type="RefSeq" id="WP_063921572.1">
    <property type="nucleotide sequence ID" value="NC_004463.1"/>
</dbReference>
<dbReference type="SMR" id="Q89BU4"/>
<dbReference type="FunCoup" id="Q89BU4">
    <property type="interactions" value="86"/>
</dbReference>
<dbReference type="EnsemblBacteria" id="BAC53319">
    <property type="protein sequence ID" value="BAC53319"/>
    <property type="gene ID" value="BAC53319"/>
</dbReference>
<dbReference type="GeneID" id="46494970"/>
<dbReference type="KEGG" id="bja:bll8054"/>
<dbReference type="PATRIC" id="fig|224911.44.peg.8215"/>
<dbReference type="eggNOG" id="COG3131">
    <property type="taxonomic scope" value="Bacteria"/>
</dbReference>
<dbReference type="HOGENOM" id="CLU_023403_2_0_5"/>
<dbReference type="InParanoid" id="Q89BU4"/>
<dbReference type="OrthoDB" id="9777817at2"/>
<dbReference type="UniPathway" id="UPA00637"/>
<dbReference type="Proteomes" id="UP000002526">
    <property type="component" value="Chromosome"/>
</dbReference>
<dbReference type="GO" id="GO:0030288">
    <property type="term" value="C:outer membrane-bounded periplasmic space"/>
    <property type="evidence" value="ECO:0000318"/>
    <property type="project" value="GO_Central"/>
</dbReference>
<dbReference type="GO" id="GO:0030246">
    <property type="term" value="F:carbohydrate binding"/>
    <property type="evidence" value="ECO:0007669"/>
    <property type="project" value="InterPro"/>
</dbReference>
<dbReference type="GO" id="GO:0003824">
    <property type="term" value="F:catalytic activity"/>
    <property type="evidence" value="ECO:0007669"/>
    <property type="project" value="InterPro"/>
</dbReference>
<dbReference type="GO" id="GO:0051274">
    <property type="term" value="P:beta-glucan biosynthetic process"/>
    <property type="evidence" value="ECO:0000318"/>
    <property type="project" value="GO_Central"/>
</dbReference>
<dbReference type="FunFam" id="2.70.98.10:FF:000001">
    <property type="entry name" value="Glucans biosynthesis protein G"/>
    <property type="match status" value="1"/>
</dbReference>
<dbReference type="Gene3D" id="2.70.98.10">
    <property type="match status" value="1"/>
</dbReference>
<dbReference type="Gene3D" id="2.60.40.10">
    <property type="entry name" value="Immunoglobulins"/>
    <property type="match status" value="1"/>
</dbReference>
<dbReference type="HAMAP" id="MF_01069">
    <property type="entry name" value="MdoG_OpgG"/>
    <property type="match status" value="1"/>
</dbReference>
<dbReference type="InterPro" id="IPR011013">
    <property type="entry name" value="Gal_mutarotase_sf_dom"/>
</dbReference>
<dbReference type="InterPro" id="IPR014718">
    <property type="entry name" value="GH-type_carb-bd"/>
</dbReference>
<dbReference type="InterPro" id="IPR014438">
    <property type="entry name" value="Glucan_biosyn_MdoG/MdoD"/>
</dbReference>
<dbReference type="InterPro" id="IPR007444">
    <property type="entry name" value="Glucan_biosyn_MdoG_C"/>
</dbReference>
<dbReference type="InterPro" id="IPR013783">
    <property type="entry name" value="Ig-like_fold"/>
</dbReference>
<dbReference type="InterPro" id="IPR014756">
    <property type="entry name" value="Ig_E-set"/>
</dbReference>
<dbReference type="InterPro" id="IPR023704">
    <property type="entry name" value="MdoG_OpgG"/>
</dbReference>
<dbReference type="InterPro" id="IPR006311">
    <property type="entry name" value="TAT_signal"/>
</dbReference>
<dbReference type="PANTHER" id="PTHR30504">
    <property type="entry name" value="GLUCANS BIOSYNTHESIS PROTEIN"/>
    <property type="match status" value="1"/>
</dbReference>
<dbReference type="PANTHER" id="PTHR30504:SF2">
    <property type="entry name" value="GLUCANS BIOSYNTHESIS PROTEIN G"/>
    <property type="match status" value="1"/>
</dbReference>
<dbReference type="Pfam" id="PF04349">
    <property type="entry name" value="MdoG"/>
    <property type="match status" value="1"/>
</dbReference>
<dbReference type="PIRSF" id="PIRSF006281">
    <property type="entry name" value="MdoG"/>
    <property type="match status" value="1"/>
</dbReference>
<dbReference type="SUPFAM" id="SSF81296">
    <property type="entry name" value="E set domains"/>
    <property type="match status" value="1"/>
</dbReference>
<dbReference type="SUPFAM" id="SSF74650">
    <property type="entry name" value="Galactose mutarotase-like"/>
    <property type="match status" value="1"/>
</dbReference>
<dbReference type="PROSITE" id="PS51318">
    <property type="entry name" value="TAT"/>
    <property type="match status" value="1"/>
</dbReference>
<reference key="1">
    <citation type="journal article" date="2002" name="DNA Res.">
        <title>Complete genomic sequence of nitrogen-fixing symbiotic bacterium Bradyrhizobium japonicum USDA110.</title>
        <authorList>
            <person name="Kaneko T."/>
            <person name="Nakamura Y."/>
            <person name="Sato S."/>
            <person name="Minamisawa K."/>
            <person name="Uchiumi T."/>
            <person name="Sasamoto S."/>
            <person name="Watanabe A."/>
            <person name="Idesawa K."/>
            <person name="Iriguchi M."/>
            <person name="Kawashima K."/>
            <person name="Kohara M."/>
            <person name="Matsumoto M."/>
            <person name="Shimpo S."/>
            <person name="Tsuruoka H."/>
            <person name="Wada T."/>
            <person name="Yamada M."/>
            <person name="Tabata S."/>
        </authorList>
    </citation>
    <scope>NUCLEOTIDE SEQUENCE [LARGE SCALE GENOMIC DNA]</scope>
    <source>
        <strain>JCM 10833 / BCRC 13528 / IAM 13628 / NBRC 14792 / USDA 110</strain>
    </source>
</reference>
<proteinExistence type="inferred from homology"/>
<keyword id="KW-0574">Periplasm</keyword>
<keyword id="KW-1185">Reference proteome</keyword>
<keyword id="KW-0732">Signal</keyword>
<organism>
    <name type="scientific">Bradyrhizobium diazoefficiens (strain JCM 10833 / BCRC 13528 / IAM 13628 / NBRC 14792 / USDA 110)</name>
    <dbReference type="NCBI Taxonomy" id="224911"/>
    <lineage>
        <taxon>Bacteria</taxon>
        <taxon>Pseudomonadati</taxon>
        <taxon>Pseudomonadota</taxon>
        <taxon>Alphaproteobacteria</taxon>
        <taxon>Hyphomicrobiales</taxon>
        <taxon>Nitrobacteraceae</taxon>
        <taxon>Bradyrhizobium</taxon>
    </lineage>
</organism>
<protein>
    <recommendedName>
        <fullName>Glucans biosynthesis protein G</fullName>
    </recommendedName>
</protein>
<sequence>MNRRQLLRGSVAVSAAAVLPRAADAQSGTALTFSPSYVRELARALATKPFAAPDEKLPEALKNLNYDQYRSIRFAPEKALWRAEKLPFEVQFFHRGFFYKNRVDIFQVADRSVTPVSYRRDDFSFGEGLGQWPDADLGFAGFRIHAPINKPDYYDELCVFLGASYFRVVAKGQTYGLSARGLAIDTGESKGEEFPVFKAFWLEKPAPSASSMVVHALLDSKSAAASYRFTIRPGQTTVFDVEMALYPRVDLEHAGLAPMTSMFFFGPNDRKDFDDFRPAVHDSDGLSIFNGRGEQLWRPLNNPHDLQVSSFTDVNPGGFGLMQRERNYLAYQDLESSFETRPSLWFEPIGDWGEGAVKLFEIPTKEEVHDNIAALWQPKQPLTAKSEHIFTYRLHWGADAPRADALARFTRTGIGSRGDDSKLFVLELTGDRLKGVDPKTIKGVVTAEKADISNIVTQPNPATGGWRLSFQCSVKGQASIELRAFLAQNDAPVSEVWIYRWTP</sequence>
<name>OPGG_BRADU</name>
<comment type="function">
    <text evidence="1">Involved in the biosynthesis of osmoregulated periplasmic glucans (OPGs).</text>
</comment>
<comment type="pathway">
    <text>Glycan metabolism; osmoregulated periplasmic glucan (OPG) biosynthesis.</text>
</comment>
<comment type="subcellular location">
    <subcellularLocation>
        <location evidence="1">Periplasm</location>
    </subcellularLocation>
</comment>
<comment type="PTM">
    <text>Predicted to be exported by the Tat system. The position of the signal peptide cleavage has not been experimentally proven.</text>
</comment>
<comment type="similarity">
    <text evidence="3">Belongs to the OpgD/OpgG family.</text>
</comment>
<comment type="sequence caution" evidence="3">
    <conflict type="erroneous initiation">
        <sequence resource="EMBL-CDS" id="BAC53319"/>
    </conflict>
</comment>
<accession>Q89BU4</accession>
<gene>
    <name type="primary">opgG</name>
    <name type="synonym">mdoG</name>
    <name type="ordered locus">bll8054</name>
</gene>